<comment type="function">
    <text evidence="1">Involved in control of chromosome replication initiation. Inhibits the cooperative binding of DnaA to the oriC region, thus negatively regulating initiation of chromosome replication. Inhibits the ability of DnaA-ATP to form a helix on DNA; does not disassemble preformed DnaA-DNA helices. Decreases the residence time of DnaA on the chromosome at its binding sites (oriC, replication forks and promoter-binding sites). Tethers DnaA to the replication machinery via the DNA polymerase beta sliding clamp subunit (dnaN). Associates with oriC and other DnaA targets on the chromosome in a DnaA-dependent manner.</text>
</comment>
<comment type="cofactor">
    <cofactor evidence="1">
        <name>Zn(2+)</name>
        <dbReference type="ChEBI" id="CHEBI:29105"/>
    </cofactor>
    <text evidence="1">Binds 1 zinc ion per subunit.</text>
</comment>
<comment type="subunit">
    <text evidence="1">Homotetramer. Interacts with both DnaA and DnaN, acting as a bridge between these two proteins.</text>
</comment>
<comment type="subcellular location">
    <subcellularLocation>
        <location evidence="1">Cytoplasm</location>
        <location evidence="1">Nucleoid</location>
    </subcellularLocation>
    <text evidence="1">Localizes in tight foci, which correspond to the replisome at mid-cell throughout the cell cycle.</text>
</comment>
<comment type="similarity">
    <text evidence="1">Belongs to the YabA family.</text>
</comment>
<reference key="1">
    <citation type="journal article" date="2006" name="Proc. Natl. Acad. Sci. U.S.A.">
        <title>Comparative genomics of the lactic acid bacteria.</title>
        <authorList>
            <person name="Makarova K.S."/>
            <person name="Slesarev A."/>
            <person name="Wolf Y.I."/>
            <person name="Sorokin A."/>
            <person name="Mirkin B."/>
            <person name="Koonin E.V."/>
            <person name="Pavlov A."/>
            <person name="Pavlova N."/>
            <person name="Karamychev V."/>
            <person name="Polouchine N."/>
            <person name="Shakhova V."/>
            <person name="Grigoriev I."/>
            <person name="Lou Y."/>
            <person name="Rohksar D."/>
            <person name="Lucas S."/>
            <person name="Huang K."/>
            <person name="Goodstein D.M."/>
            <person name="Hawkins T."/>
            <person name="Plengvidhya V."/>
            <person name="Welker D."/>
            <person name="Hughes J."/>
            <person name="Goh Y."/>
            <person name="Benson A."/>
            <person name="Baldwin K."/>
            <person name="Lee J.-H."/>
            <person name="Diaz-Muniz I."/>
            <person name="Dosti B."/>
            <person name="Smeianov V."/>
            <person name="Wechter W."/>
            <person name="Barabote R."/>
            <person name="Lorca G."/>
            <person name="Altermann E."/>
            <person name="Barrangou R."/>
            <person name="Ganesan B."/>
            <person name="Xie Y."/>
            <person name="Rawsthorne H."/>
            <person name="Tamir D."/>
            <person name="Parker C."/>
            <person name="Breidt F."/>
            <person name="Broadbent J.R."/>
            <person name="Hutkins R."/>
            <person name="O'Sullivan D."/>
            <person name="Steele J."/>
            <person name="Unlu G."/>
            <person name="Saier M.H. Jr."/>
            <person name="Klaenhammer T."/>
            <person name="Richardson P."/>
            <person name="Kozyavkin S."/>
            <person name="Weimer B.C."/>
            <person name="Mills D.A."/>
        </authorList>
    </citation>
    <scope>NUCLEOTIDE SEQUENCE [LARGE SCALE GENOMIC DNA]</scope>
    <source>
        <strain>SK11</strain>
    </source>
</reference>
<accession>Q031S0</accession>
<feature type="chain" id="PRO_1000065579" description="Replication initiation control protein YabA">
    <location>
        <begin position="1"/>
        <end position="108"/>
    </location>
</feature>
<feature type="binding site" evidence="1">
    <location>
        <position position="83"/>
    </location>
    <ligand>
        <name>Zn(2+)</name>
        <dbReference type="ChEBI" id="CHEBI:29105"/>
    </ligand>
</feature>
<feature type="binding site" evidence="1">
    <location>
        <position position="85"/>
    </location>
    <ligand>
        <name>Zn(2+)</name>
        <dbReference type="ChEBI" id="CHEBI:29105"/>
    </ligand>
</feature>
<feature type="binding site" evidence="1">
    <location>
        <position position="99"/>
    </location>
    <ligand>
        <name>Zn(2+)</name>
        <dbReference type="ChEBI" id="CHEBI:29105"/>
    </ligand>
</feature>
<feature type="binding site" evidence="1">
    <location>
        <position position="102"/>
    </location>
    <ligand>
        <name>Zn(2+)</name>
        <dbReference type="ChEBI" id="CHEBI:29105"/>
    </ligand>
</feature>
<protein>
    <recommendedName>
        <fullName evidence="1">Replication initiation control protein YabA</fullName>
    </recommendedName>
</protein>
<name>YABA_LACLS</name>
<gene>
    <name evidence="1" type="primary">yabA</name>
    <name type="ordered locus">LACR_0448</name>
</gene>
<sequence length="108" mass="12572">MADKYDVFDQLGELENTLNTTLTQISGIRQVLEASMTENATLRMELEKLRDRLAEFEKKEVKKETPKDQPNPNLIQIFNEGFHVCHLHYAERLAEGESCLDCLELLYR</sequence>
<evidence type="ECO:0000255" key="1">
    <source>
        <dbReference type="HAMAP-Rule" id="MF_01159"/>
    </source>
</evidence>
<keyword id="KW-0963">Cytoplasm</keyword>
<keyword id="KW-0235">DNA replication</keyword>
<keyword id="KW-0236">DNA replication inhibitor</keyword>
<keyword id="KW-0479">Metal-binding</keyword>
<keyword id="KW-0862">Zinc</keyword>
<dbReference type="EMBL" id="CP000425">
    <property type="protein sequence ID" value="ABJ72052.1"/>
    <property type="molecule type" value="Genomic_DNA"/>
</dbReference>
<dbReference type="RefSeq" id="WP_011675472.1">
    <property type="nucleotide sequence ID" value="NC_008527.1"/>
</dbReference>
<dbReference type="SMR" id="Q031S0"/>
<dbReference type="GeneID" id="89632575"/>
<dbReference type="KEGG" id="llc:LACR_0448"/>
<dbReference type="HOGENOM" id="CLU_157169_0_0_9"/>
<dbReference type="Proteomes" id="UP000000240">
    <property type="component" value="Chromosome"/>
</dbReference>
<dbReference type="GO" id="GO:0009295">
    <property type="term" value="C:nucleoid"/>
    <property type="evidence" value="ECO:0007669"/>
    <property type="project" value="UniProtKB-SubCell"/>
</dbReference>
<dbReference type="GO" id="GO:0006260">
    <property type="term" value="P:DNA replication"/>
    <property type="evidence" value="ECO:0007669"/>
    <property type="project" value="UniProtKB-UniRule"/>
</dbReference>
<dbReference type="HAMAP" id="MF_01159">
    <property type="entry name" value="YabA"/>
    <property type="match status" value="1"/>
</dbReference>
<dbReference type="InterPro" id="IPR010377">
    <property type="entry name" value="YabA"/>
</dbReference>
<dbReference type="NCBIfam" id="NF009642">
    <property type="entry name" value="PRK13169.1-3"/>
    <property type="match status" value="1"/>
</dbReference>
<dbReference type="Pfam" id="PF06156">
    <property type="entry name" value="YabA"/>
    <property type="match status" value="1"/>
</dbReference>
<dbReference type="PIRSF" id="PIRSF021439">
    <property type="entry name" value="DUF972"/>
    <property type="match status" value="1"/>
</dbReference>
<organism>
    <name type="scientific">Lactococcus lactis subsp. cremoris (strain SK11)</name>
    <dbReference type="NCBI Taxonomy" id="272622"/>
    <lineage>
        <taxon>Bacteria</taxon>
        <taxon>Bacillati</taxon>
        <taxon>Bacillota</taxon>
        <taxon>Bacilli</taxon>
        <taxon>Lactobacillales</taxon>
        <taxon>Streptococcaceae</taxon>
        <taxon>Lactococcus</taxon>
        <taxon>Lactococcus cremoris subsp. cremoris</taxon>
    </lineage>
</organism>
<proteinExistence type="inferred from homology"/>